<feature type="chain" id="PRO_1000142536" description="Large ribosomal subunit protein bL25">
    <location>
        <begin position="1"/>
        <end position="215"/>
    </location>
</feature>
<feature type="region of interest" description="Disordered" evidence="2">
    <location>
        <begin position="160"/>
        <end position="215"/>
    </location>
</feature>
<feature type="compositionally biased region" description="Acidic residues" evidence="2">
    <location>
        <begin position="185"/>
        <end position="215"/>
    </location>
</feature>
<protein>
    <recommendedName>
        <fullName evidence="1">Large ribosomal subunit protein bL25</fullName>
    </recommendedName>
    <alternativeName>
        <fullName evidence="3">50S ribosomal protein L25</fullName>
    </alternativeName>
    <alternativeName>
        <fullName evidence="1">General stress protein CTC</fullName>
    </alternativeName>
</protein>
<keyword id="KW-1185">Reference proteome</keyword>
<keyword id="KW-0687">Ribonucleoprotein</keyword>
<keyword id="KW-0689">Ribosomal protein</keyword>
<keyword id="KW-0694">RNA-binding</keyword>
<keyword id="KW-0699">rRNA-binding</keyword>
<evidence type="ECO:0000255" key="1">
    <source>
        <dbReference type="HAMAP-Rule" id="MF_01334"/>
    </source>
</evidence>
<evidence type="ECO:0000256" key="2">
    <source>
        <dbReference type="SAM" id="MobiDB-lite"/>
    </source>
</evidence>
<evidence type="ECO:0000305" key="3"/>
<proteinExistence type="inferred from homology"/>
<name>RL25_NATTJ</name>
<gene>
    <name evidence="1" type="primary">rplY</name>
    <name evidence="1" type="synonym">ctc</name>
    <name type="ordered locus">Nther_0062</name>
</gene>
<accession>B2A3N5</accession>
<sequence>MDRKELQVKERTVTRKSEVKKLRTNNEIPAVLYGKNIESKKLSIEKRELLDALSTAAGDNVLLDLKLDNGESYPAIFKEIQKDPIKGFFIHIDFHTIDLKETLQVSVPLNIEGEPVGVENGGIPQYQLREIEIECLPTQIPDHIEVDVSNIDLNESINVGDLPLPEGSELVTEPEETVMSVVAPETEEEPDTEEDEEGEEDVEEESEEEEEESEE</sequence>
<comment type="function">
    <text evidence="1">This is one of the proteins that binds to the 5S RNA in the ribosome where it forms part of the central protuberance.</text>
</comment>
<comment type="subunit">
    <text evidence="1">Part of the 50S ribosomal subunit; part of the 5S rRNA/L5/L18/L25 subcomplex. Contacts the 5S rRNA. Binds to the 5S rRNA independently of L5 and L18.</text>
</comment>
<comment type="similarity">
    <text evidence="1">Belongs to the bacterial ribosomal protein bL25 family. CTC subfamily.</text>
</comment>
<reference key="1">
    <citation type="submission" date="2008-04" db="EMBL/GenBank/DDBJ databases">
        <title>Complete sequence of chromosome of Natranaerobius thermophilus JW/NM-WN-LF.</title>
        <authorList>
            <consortium name="US DOE Joint Genome Institute"/>
            <person name="Copeland A."/>
            <person name="Lucas S."/>
            <person name="Lapidus A."/>
            <person name="Glavina del Rio T."/>
            <person name="Dalin E."/>
            <person name="Tice H."/>
            <person name="Bruce D."/>
            <person name="Goodwin L."/>
            <person name="Pitluck S."/>
            <person name="Chertkov O."/>
            <person name="Brettin T."/>
            <person name="Detter J.C."/>
            <person name="Han C."/>
            <person name="Kuske C.R."/>
            <person name="Schmutz J."/>
            <person name="Larimer F."/>
            <person name="Land M."/>
            <person name="Hauser L."/>
            <person name="Kyrpides N."/>
            <person name="Lykidis A."/>
            <person name="Mesbah N.M."/>
            <person name="Wiegel J."/>
        </authorList>
    </citation>
    <scope>NUCLEOTIDE SEQUENCE [LARGE SCALE GENOMIC DNA]</scope>
    <source>
        <strain>ATCC BAA-1301 / DSM 18059 / JW/NM-WN-LF</strain>
    </source>
</reference>
<dbReference type="EMBL" id="CP001034">
    <property type="protein sequence ID" value="ACB83661.1"/>
    <property type="molecule type" value="Genomic_DNA"/>
</dbReference>
<dbReference type="RefSeq" id="WP_012446552.1">
    <property type="nucleotide sequence ID" value="NC_010718.1"/>
</dbReference>
<dbReference type="SMR" id="B2A3N5"/>
<dbReference type="FunCoup" id="B2A3N5">
    <property type="interactions" value="313"/>
</dbReference>
<dbReference type="STRING" id="457570.Nther_0062"/>
<dbReference type="KEGG" id="nth:Nther_0062"/>
<dbReference type="eggNOG" id="COG1825">
    <property type="taxonomic scope" value="Bacteria"/>
</dbReference>
<dbReference type="HOGENOM" id="CLU_075939_2_1_9"/>
<dbReference type="InParanoid" id="B2A3N5"/>
<dbReference type="OrthoDB" id="9790002at2"/>
<dbReference type="Proteomes" id="UP000001683">
    <property type="component" value="Chromosome"/>
</dbReference>
<dbReference type="GO" id="GO:0022625">
    <property type="term" value="C:cytosolic large ribosomal subunit"/>
    <property type="evidence" value="ECO:0007669"/>
    <property type="project" value="TreeGrafter"/>
</dbReference>
<dbReference type="GO" id="GO:0008097">
    <property type="term" value="F:5S rRNA binding"/>
    <property type="evidence" value="ECO:0007669"/>
    <property type="project" value="InterPro"/>
</dbReference>
<dbReference type="GO" id="GO:0003735">
    <property type="term" value="F:structural constituent of ribosome"/>
    <property type="evidence" value="ECO:0007669"/>
    <property type="project" value="InterPro"/>
</dbReference>
<dbReference type="GO" id="GO:0006412">
    <property type="term" value="P:translation"/>
    <property type="evidence" value="ECO:0007669"/>
    <property type="project" value="UniProtKB-UniRule"/>
</dbReference>
<dbReference type="CDD" id="cd00495">
    <property type="entry name" value="Ribosomal_L25_TL5_CTC"/>
    <property type="match status" value="1"/>
</dbReference>
<dbReference type="Gene3D" id="2.170.120.20">
    <property type="entry name" value="Ribosomal protein L25, beta domain"/>
    <property type="match status" value="1"/>
</dbReference>
<dbReference type="Gene3D" id="2.40.240.10">
    <property type="entry name" value="Ribosomal Protein L25, Chain P"/>
    <property type="match status" value="1"/>
</dbReference>
<dbReference type="HAMAP" id="MF_01334">
    <property type="entry name" value="Ribosomal_bL25_CTC"/>
    <property type="match status" value="1"/>
</dbReference>
<dbReference type="InterPro" id="IPR020056">
    <property type="entry name" value="Rbsml_bL25/Gln-tRNA_synth_N"/>
</dbReference>
<dbReference type="InterPro" id="IPR011035">
    <property type="entry name" value="Ribosomal_bL25/Gln-tRNA_synth"/>
</dbReference>
<dbReference type="InterPro" id="IPR020057">
    <property type="entry name" value="Ribosomal_bL25_b-dom"/>
</dbReference>
<dbReference type="InterPro" id="IPR037121">
    <property type="entry name" value="Ribosomal_bL25_C"/>
</dbReference>
<dbReference type="InterPro" id="IPR001021">
    <property type="entry name" value="Ribosomal_bL25_long"/>
</dbReference>
<dbReference type="InterPro" id="IPR029751">
    <property type="entry name" value="Ribosomal_L25_dom"/>
</dbReference>
<dbReference type="InterPro" id="IPR020930">
    <property type="entry name" value="Ribosomal_uL5_bac-type"/>
</dbReference>
<dbReference type="NCBIfam" id="TIGR00731">
    <property type="entry name" value="bL25_bact_ctc"/>
    <property type="match status" value="1"/>
</dbReference>
<dbReference type="NCBIfam" id="NF004133">
    <property type="entry name" value="PRK05618.2-4"/>
    <property type="match status" value="1"/>
</dbReference>
<dbReference type="PANTHER" id="PTHR33284">
    <property type="entry name" value="RIBOSOMAL PROTEIN L25/GLN-TRNA SYNTHETASE, ANTI-CODON-BINDING DOMAIN-CONTAINING PROTEIN"/>
    <property type="match status" value="1"/>
</dbReference>
<dbReference type="PANTHER" id="PTHR33284:SF1">
    <property type="entry name" value="RIBOSOMAL PROTEIN L25_GLN-TRNA SYNTHETASE, ANTI-CODON-BINDING DOMAIN-CONTAINING PROTEIN"/>
    <property type="match status" value="1"/>
</dbReference>
<dbReference type="Pfam" id="PF01386">
    <property type="entry name" value="Ribosomal_L25p"/>
    <property type="match status" value="1"/>
</dbReference>
<dbReference type="Pfam" id="PF14693">
    <property type="entry name" value="Ribosomal_TL5_C"/>
    <property type="match status" value="1"/>
</dbReference>
<dbReference type="SUPFAM" id="SSF50715">
    <property type="entry name" value="Ribosomal protein L25-like"/>
    <property type="match status" value="1"/>
</dbReference>
<organism>
    <name type="scientific">Natranaerobius thermophilus (strain ATCC BAA-1301 / DSM 18059 / JW/NM-WN-LF)</name>
    <dbReference type="NCBI Taxonomy" id="457570"/>
    <lineage>
        <taxon>Bacteria</taxon>
        <taxon>Bacillati</taxon>
        <taxon>Bacillota</taxon>
        <taxon>Clostridia</taxon>
        <taxon>Natranaerobiales</taxon>
        <taxon>Natranaerobiaceae</taxon>
        <taxon>Natranaerobius</taxon>
    </lineage>
</organism>